<sequence>EQCGRQAGGKLCPNNLCCSQYGWCGSSDDYCSPSKNCQSNCKGGG</sequence>
<comment type="function">
    <text>N-acetyl-D-glucosamine / N-acetyl-D-neuraminic acid binding lectin. Can inhibit fungal growth.</text>
</comment>
<accession>P80359</accession>
<name>HEVP_HEVBR</name>
<dbReference type="PIR" id="S50180">
    <property type="entry name" value="S50180"/>
</dbReference>
<dbReference type="SMR" id="P80359"/>
<dbReference type="CAZy" id="CBM18">
    <property type="family name" value="Carbohydrate-Binding Module Family 18"/>
</dbReference>
<dbReference type="GO" id="GO:0008061">
    <property type="term" value="F:chitin binding"/>
    <property type="evidence" value="ECO:0007669"/>
    <property type="project" value="UniProtKB-KW"/>
</dbReference>
<dbReference type="FunFam" id="3.30.60.10:FF:000001">
    <property type="entry name" value="Basic endochitinase"/>
    <property type="match status" value="1"/>
</dbReference>
<dbReference type="Gene3D" id="3.30.60.10">
    <property type="entry name" value="Endochitinase-like"/>
    <property type="match status" value="1"/>
</dbReference>
<dbReference type="InterPro" id="IPR001002">
    <property type="entry name" value="Chitin-bd_1"/>
</dbReference>
<dbReference type="InterPro" id="IPR018371">
    <property type="entry name" value="Chitin-binding_1_CS"/>
</dbReference>
<dbReference type="InterPro" id="IPR036861">
    <property type="entry name" value="Endochitinase-like_sf"/>
</dbReference>
<dbReference type="PANTHER" id="PTHR47849">
    <property type="entry name" value="CHITIN-BINDING LECTIN 1"/>
    <property type="match status" value="1"/>
</dbReference>
<dbReference type="PANTHER" id="PTHR47849:SF8">
    <property type="entry name" value="LECTIN"/>
    <property type="match status" value="1"/>
</dbReference>
<dbReference type="Pfam" id="PF00187">
    <property type="entry name" value="Chitin_bind_1"/>
    <property type="match status" value="1"/>
</dbReference>
<dbReference type="PRINTS" id="PR00451">
    <property type="entry name" value="CHITINBINDNG"/>
</dbReference>
<dbReference type="SMART" id="SM00270">
    <property type="entry name" value="ChtBD1"/>
    <property type="match status" value="1"/>
</dbReference>
<dbReference type="SUPFAM" id="SSF57016">
    <property type="entry name" value="Plant lectins/antimicrobial peptides"/>
    <property type="match status" value="1"/>
</dbReference>
<dbReference type="PROSITE" id="PS00026">
    <property type="entry name" value="CHIT_BIND_I_1"/>
    <property type="match status" value="1"/>
</dbReference>
<dbReference type="PROSITE" id="PS50941">
    <property type="entry name" value="CHIT_BIND_I_2"/>
    <property type="match status" value="1"/>
</dbReference>
<evidence type="ECO:0000255" key="1">
    <source>
        <dbReference type="PROSITE-ProRule" id="PRU00261"/>
    </source>
</evidence>
<proteinExistence type="evidence at protein level"/>
<protein>
    <recommendedName>
        <fullName>Pseudo-hevein</fullName>
    </recommendedName>
    <alternativeName>
        <fullName>Minor hevein</fullName>
    </alternativeName>
</protein>
<keyword id="KW-0147">Chitin-binding</keyword>
<keyword id="KW-0903">Direct protein sequencing</keyword>
<keyword id="KW-1015">Disulfide bond</keyword>
<reference key="1">
    <citation type="journal article" date="1994" name="Biochim. Biophys. Acta">
        <title>Demonstration by mass spectrometry that pseudo-hevein and hevein have ragged C-terminal sequences.</title>
        <authorList>
            <person name="Soedjanaatmadja U.M.S."/>
            <person name="Hofsteenge J."/>
            <person name="Jeronimus-Stratingh C.M."/>
            <person name="Bruins A.P."/>
            <person name="Beintema J.J."/>
        </authorList>
    </citation>
    <scope>PROTEIN SEQUENCE</scope>
    <source>
        <tissue>Latex</tissue>
    </source>
</reference>
<feature type="chain" id="PRO_0000124815" description="Pseudo-hevein">
    <location>
        <begin position="1"/>
        <end position="45"/>
    </location>
</feature>
<feature type="domain" description="Chitin-binding type-1" evidence="1">
    <location>
        <begin position="1"/>
        <end position="43"/>
    </location>
</feature>
<feature type="disulfide bond" evidence="1">
    <location>
        <begin position="3"/>
        <end position="18"/>
    </location>
</feature>
<feature type="disulfide bond" evidence="1">
    <location>
        <begin position="12"/>
        <end position="24"/>
    </location>
</feature>
<feature type="disulfide bond" evidence="1">
    <location>
        <begin position="17"/>
        <end position="31"/>
    </location>
</feature>
<feature type="disulfide bond" evidence="1">
    <location>
        <begin position="37"/>
        <end position="41"/>
    </location>
</feature>
<organism>
    <name type="scientific">Hevea brasiliensis</name>
    <name type="common">Para rubber tree</name>
    <name type="synonym">Siphonia brasiliensis</name>
    <dbReference type="NCBI Taxonomy" id="3981"/>
    <lineage>
        <taxon>Eukaryota</taxon>
        <taxon>Viridiplantae</taxon>
        <taxon>Streptophyta</taxon>
        <taxon>Embryophyta</taxon>
        <taxon>Tracheophyta</taxon>
        <taxon>Spermatophyta</taxon>
        <taxon>Magnoliopsida</taxon>
        <taxon>eudicotyledons</taxon>
        <taxon>Gunneridae</taxon>
        <taxon>Pentapetalae</taxon>
        <taxon>rosids</taxon>
        <taxon>fabids</taxon>
        <taxon>Malpighiales</taxon>
        <taxon>Euphorbiaceae</taxon>
        <taxon>Crotonoideae</taxon>
        <taxon>Micrandreae</taxon>
        <taxon>Hevea</taxon>
    </lineage>
</organism>